<name>SYV_SALPA</name>
<reference key="1">
    <citation type="journal article" date="2004" name="Nat. Genet.">
        <title>Comparison of genome degradation in Paratyphi A and Typhi, human-restricted serovars of Salmonella enterica that cause typhoid.</title>
        <authorList>
            <person name="McClelland M."/>
            <person name="Sanderson K.E."/>
            <person name="Clifton S.W."/>
            <person name="Latreille P."/>
            <person name="Porwollik S."/>
            <person name="Sabo A."/>
            <person name="Meyer R."/>
            <person name="Bieri T."/>
            <person name="Ozersky P."/>
            <person name="McLellan M."/>
            <person name="Harkins C.R."/>
            <person name="Wang C."/>
            <person name="Nguyen C."/>
            <person name="Berghoff A."/>
            <person name="Elliott G."/>
            <person name="Kohlberg S."/>
            <person name="Strong C."/>
            <person name="Du F."/>
            <person name="Carter J."/>
            <person name="Kremizki C."/>
            <person name="Layman D."/>
            <person name="Leonard S."/>
            <person name="Sun H."/>
            <person name="Fulton L."/>
            <person name="Nash W."/>
            <person name="Miner T."/>
            <person name="Minx P."/>
            <person name="Delehaunty K."/>
            <person name="Fronick C."/>
            <person name="Magrini V."/>
            <person name="Nhan M."/>
            <person name="Warren W."/>
            <person name="Florea L."/>
            <person name="Spieth J."/>
            <person name="Wilson R.K."/>
        </authorList>
    </citation>
    <scope>NUCLEOTIDE SEQUENCE [LARGE SCALE GENOMIC DNA]</scope>
    <source>
        <strain>ATCC 9150 / SARB42</strain>
    </source>
</reference>
<protein>
    <recommendedName>
        <fullName evidence="1">Valine--tRNA ligase</fullName>
        <ecNumber evidence="1">6.1.1.9</ecNumber>
    </recommendedName>
    <alternativeName>
        <fullName evidence="1">Valyl-tRNA synthetase</fullName>
        <shortName evidence="1">ValRS</shortName>
    </alternativeName>
</protein>
<accession>Q5PJB8</accession>
<comment type="function">
    <text evidence="1">Catalyzes the attachment of valine to tRNA(Val). As ValRS can inadvertently accommodate and process structurally similar amino acids such as threonine, to avoid such errors, it has a 'posttransfer' editing activity that hydrolyzes mischarged Thr-tRNA(Val) in a tRNA-dependent manner.</text>
</comment>
<comment type="catalytic activity">
    <reaction evidence="1">
        <text>tRNA(Val) + L-valine + ATP = L-valyl-tRNA(Val) + AMP + diphosphate</text>
        <dbReference type="Rhea" id="RHEA:10704"/>
        <dbReference type="Rhea" id="RHEA-COMP:9672"/>
        <dbReference type="Rhea" id="RHEA-COMP:9708"/>
        <dbReference type="ChEBI" id="CHEBI:30616"/>
        <dbReference type="ChEBI" id="CHEBI:33019"/>
        <dbReference type="ChEBI" id="CHEBI:57762"/>
        <dbReference type="ChEBI" id="CHEBI:78442"/>
        <dbReference type="ChEBI" id="CHEBI:78537"/>
        <dbReference type="ChEBI" id="CHEBI:456215"/>
        <dbReference type="EC" id="6.1.1.9"/>
    </reaction>
</comment>
<comment type="subunit">
    <text evidence="1">Monomer.</text>
</comment>
<comment type="subcellular location">
    <subcellularLocation>
        <location evidence="1">Cytoplasm</location>
    </subcellularLocation>
</comment>
<comment type="domain">
    <text evidence="1">ValRS has two distinct active sites: one for aminoacylation and one for editing. The misactivated threonine is translocated from the active site to the editing site.</text>
</comment>
<comment type="domain">
    <text evidence="1">The C-terminal coiled-coil domain is crucial for aminoacylation activity.</text>
</comment>
<comment type="similarity">
    <text evidence="1">Belongs to the class-I aminoacyl-tRNA synthetase family. ValS type 1 subfamily.</text>
</comment>
<feature type="chain" id="PRO_0000224550" description="Valine--tRNA ligase">
    <location>
        <begin position="1"/>
        <end position="951"/>
    </location>
</feature>
<feature type="coiled-coil region" evidence="1">
    <location>
        <begin position="880"/>
        <end position="944"/>
    </location>
</feature>
<feature type="short sequence motif" description="'HIGH' region">
    <location>
        <begin position="42"/>
        <end position="52"/>
    </location>
</feature>
<feature type="short sequence motif" description="'KMSKS' region">
    <location>
        <begin position="554"/>
        <end position="558"/>
    </location>
</feature>
<feature type="binding site" evidence="1">
    <location>
        <position position="557"/>
    </location>
    <ligand>
        <name>ATP</name>
        <dbReference type="ChEBI" id="CHEBI:30616"/>
    </ligand>
</feature>
<proteinExistence type="inferred from homology"/>
<evidence type="ECO:0000255" key="1">
    <source>
        <dbReference type="HAMAP-Rule" id="MF_02004"/>
    </source>
</evidence>
<dbReference type="EC" id="6.1.1.9" evidence="1"/>
<dbReference type="EMBL" id="CP000026">
    <property type="protein sequence ID" value="AAV80010.1"/>
    <property type="molecule type" value="Genomic_DNA"/>
</dbReference>
<dbReference type="RefSeq" id="WP_000416349.1">
    <property type="nucleotide sequence ID" value="NC_006511.1"/>
</dbReference>
<dbReference type="SMR" id="Q5PJB8"/>
<dbReference type="KEGG" id="spt:SPA4276"/>
<dbReference type="HOGENOM" id="CLU_001493_0_2_6"/>
<dbReference type="Proteomes" id="UP000008185">
    <property type="component" value="Chromosome"/>
</dbReference>
<dbReference type="GO" id="GO:0005829">
    <property type="term" value="C:cytosol"/>
    <property type="evidence" value="ECO:0007669"/>
    <property type="project" value="TreeGrafter"/>
</dbReference>
<dbReference type="GO" id="GO:0002161">
    <property type="term" value="F:aminoacyl-tRNA deacylase activity"/>
    <property type="evidence" value="ECO:0007669"/>
    <property type="project" value="InterPro"/>
</dbReference>
<dbReference type="GO" id="GO:0005524">
    <property type="term" value="F:ATP binding"/>
    <property type="evidence" value="ECO:0007669"/>
    <property type="project" value="UniProtKB-UniRule"/>
</dbReference>
<dbReference type="GO" id="GO:0004832">
    <property type="term" value="F:valine-tRNA ligase activity"/>
    <property type="evidence" value="ECO:0007669"/>
    <property type="project" value="UniProtKB-UniRule"/>
</dbReference>
<dbReference type="GO" id="GO:0006438">
    <property type="term" value="P:valyl-tRNA aminoacylation"/>
    <property type="evidence" value="ECO:0007669"/>
    <property type="project" value="UniProtKB-UniRule"/>
</dbReference>
<dbReference type="CDD" id="cd07962">
    <property type="entry name" value="Anticodon_Ia_Val"/>
    <property type="match status" value="1"/>
</dbReference>
<dbReference type="CDD" id="cd00817">
    <property type="entry name" value="ValRS_core"/>
    <property type="match status" value="1"/>
</dbReference>
<dbReference type="FunFam" id="1.10.287.380:FF:000001">
    <property type="entry name" value="Valine--tRNA ligase"/>
    <property type="match status" value="1"/>
</dbReference>
<dbReference type="FunFam" id="1.10.730.10:FF:000007">
    <property type="entry name" value="Valine--tRNA ligase"/>
    <property type="match status" value="1"/>
</dbReference>
<dbReference type="FunFam" id="3.40.50.620:FF:000032">
    <property type="entry name" value="Valine--tRNA ligase"/>
    <property type="match status" value="1"/>
</dbReference>
<dbReference type="FunFam" id="3.40.50.620:FF:000146">
    <property type="entry name" value="Valine--tRNA ligase"/>
    <property type="match status" value="1"/>
</dbReference>
<dbReference type="FunFam" id="3.90.740.10:FF:000021">
    <property type="entry name" value="Valine--tRNA ligase"/>
    <property type="match status" value="1"/>
</dbReference>
<dbReference type="Gene3D" id="3.40.50.620">
    <property type="entry name" value="HUPs"/>
    <property type="match status" value="2"/>
</dbReference>
<dbReference type="Gene3D" id="1.10.730.10">
    <property type="entry name" value="Isoleucyl-tRNA Synthetase, Domain 1"/>
    <property type="match status" value="1"/>
</dbReference>
<dbReference type="Gene3D" id="1.10.287.380">
    <property type="entry name" value="Valyl-tRNA synthetase, C-terminal domain"/>
    <property type="match status" value="1"/>
</dbReference>
<dbReference type="Gene3D" id="3.90.740.10">
    <property type="entry name" value="Valyl/Leucyl/Isoleucyl-tRNA synthetase, editing domain"/>
    <property type="match status" value="1"/>
</dbReference>
<dbReference type="HAMAP" id="MF_02004">
    <property type="entry name" value="Val_tRNA_synth_type1"/>
    <property type="match status" value="1"/>
</dbReference>
<dbReference type="InterPro" id="IPR001412">
    <property type="entry name" value="aa-tRNA-synth_I_CS"/>
</dbReference>
<dbReference type="InterPro" id="IPR002300">
    <property type="entry name" value="aa-tRNA-synth_Ia"/>
</dbReference>
<dbReference type="InterPro" id="IPR033705">
    <property type="entry name" value="Anticodon_Ia_Val"/>
</dbReference>
<dbReference type="InterPro" id="IPR013155">
    <property type="entry name" value="M/V/L/I-tRNA-synth_anticd-bd"/>
</dbReference>
<dbReference type="InterPro" id="IPR014729">
    <property type="entry name" value="Rossmann-like_a/b/a_fold"/>
</dbReference>
<dbReference type="InterPro" id="IPR010978">
    <property type="entry name" value="tRNA-bd_arm"/>
</dbReference>
<dbReference type="InterPro" id="IPR009080">
    <property type="entry name" value="tRNAsynth_Ia_anticodon-bd"/>
</dbReference>
<dbReference type="InterPro" id="IPR037118">
    <property type="entry name" value="Val-tRNA_synth_C_sf"/>
</dbReference>
<dbReference type="InterPro" id="IPR019499">
    <property type="entry name" value="Val-tRNA_synth_tRNA-bd"/>
</dbReference>
<dbReference type="InterPro" id="IPR009008">
    <property type="entry name" value="Val/Leu/Ile-tRNA-synth_edit"/>
</dbReference>
<dbReference type="InterPro" id="IPR002303">
    <property type="entry name" value="Valyl-tRNA_ligase"/>
</dbReference>
<dbReference type="NCBIfam" id="NF004349">
    <property type="entry name" value="PRK05729.1"/>
    <property type="match status" value="1"/>
</dbReference>
<dbReference type="NCBIfam" id="TIGR00422">
    <property type="entry name" value="valS"/>
    <property type="match status" value="1"/>
</dbReference>
<dbReference type="PANTHER" id="PTHR11946:SF93">
    <property type="entry name" value="VALINE--TRNA LIGASE, CHLOROPLASTIC_MITOCHONDRIAL 2"/>
    <property type="match status" value="1"/>
</dbReference>
<dbReference type="PANTHER" id="PTHR11946">
    <property type="entry name" value="VALYL-TRNA SYNTHETASES"/>
    <property type="match status" value="1"/>
</dbReference>
<dbReference type="Pfam" id="PF08264">
    <property type="entry name" value="Anticodon_1"/>
    <property type="match status" value="1"/>
</dbReference>
<dbReference type="Pfam" id="PF00133">
    <property type="entry name" value="tRNA-synt_1"/>
    <property type="match status" value="1"/>
</dbReference>
<dbReference type="Pfam" id="PF10458">
    <property type="entry name" value="Val_tRNA-synt_C"/>
    <property type="match status" value="1"/>
</dbReference>
<dbReference type="PRINTS" id="PR00986">
    <property type="entry name" value="TRNASYNTHVAL"/>
</dbReference>
<dbReference type="SUPFAM" id="SSF47323">
    <property type="entry name" value="Anticodon-binding domain of a subclass of class I aminoacyl-tRNA synthetases"/>
    <property type="match status" value="1"/>
</dbReference>
<dbReference type="SUPFAM" id="SSF52374">
    <property type="entry name" value="Nucleotidylyl transferase"/>
    <property type="match status" value="1"/>
</dbReference>
<dbReference type="SUPFAM" id="SSF46589">
    <property type="entry name" value="tRNA-binding arm"/>
    <property type="match status" value="1"/>
</dbReference>
<dbReference type="SUPFAM" id="SSF50677">
    <property type="entry name" value="ValRS/IleRS/LeuRS editing domain"/>
    <property type="match status" value="1"/>
</dbReference>
<dbReference type="PROSITE" id="PS00178">
    <property type="entry name" value="AA_TRNA_LIGASE_I"/>
    <property type="match status" value="1"/>
</dbReference>
<organism>
    <name type="scientific">Salmonella paratyphi A (strain ATCC 9150 / SARB42)</name>
    <dbReference type="NCBI Taxonomy" id="295319"/>
    <lineage>
        <taxon>Bacteria</taxon>
        <taxon>Pseudomonadati</taxon>
        <taxon>Pseudomonadota</taxon>
        <taxon>Gammaproteobacteria</taxon>
        <taxon>Enterobacterales</taxon>
        <taxon>Enterobacteriaceae</taxon>
        <taxon>Salmonella</taxon>
    </lineage>
</organism>
<gene>
    <name evidence="1" type="primary">valS</name>
    <name type="ordered locus">SPA4276</name>
</gene>
<sequence length="951" mass="108254">MEKTYNPQDIEQPLYEHWEKQGYFKPNGDESKESFCIMIPPPNVTGSLHMGHAFQQTIMDTMIRYQRMQGKNTLWQVGTDHAGIATQMVVERKIAAEEGKTRHDYGRDAFIDKIWQWKAESGGTITRQMRRLGNSVDWERERFTMDEGLSNAVKEVFVRLYKEDLIYRGKRLVNWDPKLRTAISDLEVENRESKGSMWHIRYPLADGAKTADGKDYLVVATTRPETVLGDTGVAVNPEDPRYKDLIGKFVILPLVNRRIPIVGDEHADMEKGTGCVKITPAHDFNDYEVGKRHALPMINILTFDGDIRESAEVFDTKGEESNVYSSEIPAEFQKLERFAARKAIVAAVDALGLLEEIKPHDLTVPYGDRGGVVIEPMLTDQWYVRADVLAKPAVEAVENGDIQFVPKQYENMYFSWMRDIQDWCISRQLWWGHRIPAWYGNDGNVYVGRTEDEVRQENNLGADVQLRQDEDVLDTWFSSALWTFSTLGWPENTDALRQFHPTSVMVSGFDIIFFWIARMIMMTMHFIKDENGKPQVPFHTVYMTGLIRDDEGQKMSKSKGNVIDPLDMVDGISLPELLEKRTGNMMQPQMAEKIRKRTEKQFPNGIEPHGTDALRFTLAALASTGRDINWDMKRLEGYRNFCNKLWNASRFVLMNTEEQDCGFNGGEMTLSLADRWILAEFNQTVKAYREALDNFRFDIAAGILYEFTWNQFCDWYLELTKPVMTGGSESELRGTRHTLVTVLEGLLRLAHPIIPFITETIWQRVKVICGITADTIMLQPFPEYNAAQVDEAALADTEWLKQAIVAVRNIRAEMNIAPGKPLELLLRGCSEEAVRRVNDNRSFLLNLARLESITVLPADDKGPVSVTKIIDGAELLIPMAGLINKEDELARLAKEVAKIEGEIARIEGKLSNEGFVARAPEAVIAKEREKLDGYAEAKAKLIEQQAVISAL</sequence>
<keyword id="KW-0030">Aminoacyl-tRNA synthetase</keyword>
<keyword id="KW-0067">ATP-binding</keyword>
<keyword id="KW-0175">Coiled coil</keyword>
<keyword id="KW-0963">Cytoplasm</keyword>
<keyword id="KW-0436">Ligase</keyword>
<keyword id="KW-0547">Nucleotide-binding</keyword>
<keyword id="KW-0648">Protein biosynthesis</keyword>